<accession>A9BEI3</accession>
<comment type="function">
    <text evidence="1">Thiolesterase that catalyzes the hydrolysis of S-D-lactoyl-glutathione to form glutathione and D-lactic acid.</text>
</comment>
<comment type="catalytic activity">
    <reaction evidence="1">
        <text>an S-(2-hydroxyacyl)glutathione + H2O = a 2-hydroxy carboxylate + glutathione + H(+)</text>
        <dbReference type="Rhea" id="RHEA:21864"/>
        <dbReference type="ChEBI" id="CHEBI:15377"/>
        <dbReference type="ChEBI" id="CHEBI:15378"/>
        <dbReference type="ChEBI" id="CHEBI:57925"/>
        <dbReference type="ChEBI" id="CHEBI:58896"/>
        <dbReference type="ChEBI" id="CHEBI:71261"/>
        <dbReference type="EC" id="3.1.2.6"/>
    </reaction>
</comment>
<comment type="cofactor">
    <cofactor evidence="1">
        <name>Zn(2+)</name>
        <dbReference type="ChEBI" id="CHEBI:29105"/>
    </cofactor>
    <text evidence="1">Binds 2 Zn(2+) ions per subunit.</text>
</comment>
<comment type="pathway">
    <text evidence="1">Secondary metabolite metabolism; methylglyoxal degradation; (R)-lactate from methylglyoxal: step 2/2.</text>
</comment>
<comment type="subunit">
    <text evidence="1">Monomer.</text>
</comment>
<comment type="similarity">
    <text evidence="1">Belongs to the metallo-beta-lactamase superfamily. Glyoxalase II family.</text>
</comment>
<feature type="chain" id="PRO_1000144777" description="Hydroxyacylglutathione hydrolase">
    <location>
        <begin position="1"/>
        <end position="253"/>
    </location>
</feature>
<feature type="binding site" evidence="1">
    <location>
        <position position="59"/>
    </location>
    <ligand>
        <name>Zn(2+)</name>
        <dbReference type="ChEBI" id="CHEBI:29105"/>
        <label>1</label>
    </ligand>
</feature>
<feature type="binding site" evidence="1">
    <location>
        <position position="61"/>
    </location>
    <ligand>
        <name>Zn(2+)</name>
        <dbReference type="ChEBI" id="CHEBI:29105"/>
        <label>1</label>
    </ligand>
</feature>
<feature type="binding site" evidence="1">
    <location>
        <position position="63"/>
    </location>
    <ligand>
        <name>Zn(2+)</name>
        <dbReference type="ChEBI" id="CHEBI:29105"/>
        <label>2</label>
    </ligand>
</feature>
<feature type="binding site" evidence="1">
    <location>
        <position position="64"/>
    </location>
    <ligand>
        <name>Zn(2+)</name>
        <dbReference type="ChEBI" id="CHEBI:29105"/>
        <label>2</label>
    </ligand>
</feature>
<feature type="binding site" evidence="1">
    <location>
        <position position="118"/>
    </location>
    <ligand>
        <name>Zn(2+)</name>
        <dbReference type="ChEBI" id="CHEBI:29105"/>
        <label>1</label>
    </ligand>
</feature>
<feature type="binding site" evidence="1">
    <location>
        <position position="143"/>
    </location>
    <ligand>
        <name>Zn(2+)</name>
        <dbReference type="ChEBI" id="CHEBI:29105"/>
        <label>1</label>
    </ligand>
</feature>
<feature type="binding site" evidence="1">
    <location>
        <position position="143"/>
    </location>
    <ligand>
        <name>Zn(2+)</name>
        <dbReference type="ChEBI" id="CHEBI:29105"/>
        <label>2</label>
    </ligand>
</feature>
<feature type="binding site" evidence="1">
    <location>
        <position position="181"/>
    </location>
    <ligand>
        <name>Zn(2+)</name>
        <dbReference type="ChEBI" id="CHEBI:29105"/>
        <label>2</label>
    </ligand>
</feature>
<gene>
    <name evidence="1" type="primary">gloB</name>
    <name type="ordered locus">P9211_05621</name>
</gene>
<dbReference type="EC" id="3.1.2.6" evidence="1"/>
<dbReference type="EMBL" id="CP000878">
    <property type="protein sequence ID" value="ABX08493.1"/>
    <property type="molecule type" value="Genomic_DNA"/>
</dbReference>
<dbReference type="RefSeq" id="WP_012195115.1">
    <property type="nucleotide sequence ID" value="NC_009976.1"/>
</dbReference>
<dbReference type="SMR" id="A9BEI3"/>
<dbReference type="STRING" id="93059.P9211_05621"/>
<dbReference type="KEGG" id="pmj:P9211_05621"/>
<dbReference type="eggNOG" id="COG0491">
    <property type="taxonomic scope" value="Bacteria"/>
</dbReference>
<dbReference type="HOGENOM" id="CLU_030571_4_1_3"/>
<dbReference type="OrthoDB" id="9802897at2"/>
<dbReference type="UniPathway" id="UPA00619">
    <property type="reaction ID" value="UER00676"/>
</dbReference>
<dbReference type="Proteomes" id="UP000000788">
    <property type="component" value="Chromosome"/>
</dbReference>
<dbReference type="GO" id="GO:0004416">
    <property type="term" value="F:hydroxyacylglutathione hydrolase activity"/>
    <property type="evidence" value="ECO:0007669"/>
    <property type="project" value="UniProtKB-UniRule"/>
</dbReference>
<dbReference type="GO" id="GO:0046872">
    <property type="term" value="F:metal ion binding"/>
    <property type="evidence" value="ECO:0007669"/>
    <property type="project" value="UniProtKB-KW"/>
</dbReference>
<dbReference type="GO" id="GO:0019243">
    <property type="term" value="P:methylglyoxal catabolic process to D-lactate via S-lactoyl-glutathione"/>
    <property type="evidence" value="ECO:0007669"/>
    <property type="project" value="InterPro"/>
</dbReference>
<dbReference type="CDD" id="cd07723">
    <property type="entry name" value="hydroxyacylglutathione_hydrolase_MBL-fold"/>
    <property type="match status" value="1"/>
</dbReference>
<dbReference type="Gene3D" id="3.60.15.10">
    <property type="entry name" value="Ribonuclease Z/Hydroxyacylglutathione hydrolase-like"/>
    <property type="match status" value="1"/>
</dbReference>
<dbReference type="HAMAP" id="MF_01374">
    <property type="entry name" value="Glyoxalase_2"/>
    <property type="match status" value="1"/>
</dbReference>
<dbReference type="InterPro" id="IPR035680">
    <property type="entry name" value="Clx_II_MBL"/>
</dbReference>
<dbReference type="InterPro" id="IPR050110">
    <property type="entry name" value="Glyoxalase_II_hydrolase"/>
</dbReference>
<dbReference type="InterPro" id="IPR032282">
    <property type="entry name" value="HAGH_C"/>
</dbReference>
<dbReference type="InterPro" id="IPR017782">
    <property type="entry name" value="Hydroxyacylglutathione_Hdrlase"/>
</dbReference>
<dbReference type="InterPro" id="IPR001279">
    <property type="entry name" value="Metallo-B-lactamas"/>
</dbReference>
<dbReference type="InterPro" id="IPR036866">
    <property type="entry name" value="RibonucZ/Hydroxyglut_hydro"/>
</dbReference>
<dbReference type="NCBIfam" id="TIGR03413">
    <property type="entry name" value="GSH_gloB"/>
    <property type="match status" value="1"/>
</dbReference>
<dbReference type="PANTHER" id="PTHR43705">
    <property type="entry name" value="HYDROXYACYLGLUTATHIONE HYDROLASE"/>
    <property type="match status" value="1"/>
</dbReference>
<dbReference type="PANTHER" id="PTHR43705:SF1">
    <property type="entry name" value="HYDROXYACYLGLUTATHIONE HYDROLASE GLOB"/>
    <property type="match status" value="1"/>
</dbReference>
<dbReference type="Pfam" id="PF16123">
    <property type="entry name" value="HAGH_C"/>
    <property type="match status" value="1"/>
</dbReference>
<dbReference type="Pfam" id="PF00753">
    <property type="entry name" value="Lactamase_B"/>
    <property type="match status" value="1"/>
</dbReference>
<dbReference type="PIRSF" id="PIRSF005457">
    <property type="entry name" value="Glx"/>
    <property type="match status" value="1"/>
</dbReference>
<dbReference type="SMART" id="SM00849">
    <property type="entry name" value="Lactamase_B"/>
    <property type="match status" value="1"/>
</dbReference>
<dbReference type="SUPFAM" id="SSF56281">
    <property type="entry name" value="Metallo-hydrolase/oxidoreductase"/>
    <property type="match status" value="1"/>
</dbReference>
<keyword id="KW-0378">Hydrolase</keyword>
<keyword id="KW-0479">Metal-binding</keyword>
<keyword id="KW-1185">Reference proteome</keyword>
<keyword id="KW-0862">Zinc</keyword>
<sequence>MTQEKKDFTIHALPVLKDNIIWIWEASGQAVVVDPAVSEPVKEFLSQNNLALNSVLQTHHHDDHIGGTRDLISNWPSASIIACKTDLERIPFQTHSVTDQEVFTLFGYSVKVLEVPGHTRGHVAYYLSDTNADNRNPALFCGDTLFAGGCGRLFEGTPHEMFKSLKLLNSLPSNTKIYCAHEYTESNLHWANHLYPEDLLIKKRLEYVSSQRANGLLSLPSTIAEERKTNLFFRARTLEQFSQFRKHKDNWMS</sequence>
<protein>
    <recommendedName>
        <fullName evidence="1">Hydroxyacylglutathione hydrolase</fullName>
        <ecNumber evidence="1">3.1.2.6</ecNumber>
    </recommendedName>
    <alternativeName>
        <fullName evidence="1">Glyoxalase II</fullName>
        <shortName evidence="1">Glx II</shortName>
    </alternativeName>
</protein>
<proteinExistence type="inferred from homology"/>
<evidence type="ECO:0000255" key="1">
    <source>
        <dbReference type="HAMAP-Rule" id="MF_01374"/>
    </source>
</evidence>
<reference key="1">
    <citation type="journal article" date="2007" name="PLoS Genet.">
        <title>Patterns and implications of gene gain and loss in the evolution of Prochlorococcus.</title>
        <authorList>
            <person name="Kettler G.C."/>
            <person name="Martiny A.C."/>
            <person name="Huang K."/>
            <person name="Zucker J."/>
            <person name="Coleman M.L."/>
            <person name="Rodrigue S."/>
            <person name="Chen F."/>
            <person name="Lapidus A."/>
            <person name="Ferriera S."/>
            <person name="Johnson J."/>
            <person name="Steglich C."/>
            <person name="Church G.M."/>
            <person name="Richardson P."/>
            <person name="Chisholm S.W."/>
        </authorList>
    </citation>
    <scope>NUCLEOTIDE SEQUENCE [LARGE SCALE GENOMIC DNA]</scope>
    <source>
        <strain>MIT 9211</strain>
    </source>
</reference>
<name>GLO2_PROM4</name>
<organism>
    <name type="scientific">Prochlorococcus marinus (strain MIT 9211)</name>
    <dbReference type="NCBI Taxonomy" id="93059"/>
    <lineage>
        <taxon>Bacteria</taxon>
        <taxon>Bacillati</taxon>
        <taxon>Cyanobacteriota</taxon>
        <taxon>Cyanophyceae</taxon>
        <taxon>Synechococcales</taxon>
        <taxon>Prochlorococcaceae</taxon>
        <taxon>Prochlorococcus</taxon>
    </lineage>
</organism>